<proteinExistence type="inferred from homology"/>
<reference key="1">
    <citation type="journal article" date="2006" name="Mol. Microbiol.">
        <title>Role of pathogenicity island-associated integrases in the genome plasticity of uropathogenic Escherichia coli strain 536.</title>
        <authorList>
            <person name="Hochhut B."/>
            <person name="Wilde C."/>
            <person name="Balling G."/>
            <person name="Middendorf B."/>
            <person name="Dobrindt U."/>
            <person name="Brzuszkiewicz E."/>
            <person name="Gottschalk G."/>
            <person name="Carniel E."/>
            <person name="Hacker J."/>
        </authorList>
    </citation>
    <scope>NUCLEOTIDE SEQUENCE [LARGE SCALE GENOMIC DNA]</scope>
    <source>
        <strain>536 / UPEC</strain>
    </source>
</reference>
<keyword id="KW-0378">Hydrolase</keyword>
<keyword id="KW-0408">Iron</keyword>
<keyword id="KW-0479">Metal-binding</keyword>
<keyword id="KW-0648">Protein biosynthesis</keyword>
<gene>
    <name evidence="1" type="primary">def</name>
    <name type="ordered locus">ECP_3374</name>
</gene>
<protein>
    <recommendedName>
        <fullName evidence="1">Peptide deformylase</fullName>
        <shortName evidence="1">PDF</shortName>
        <ecNumber evidence="1">3.5.1.88</ecNumber>
    </recommendedName>
    <alternativeName>
        <fullName evidence="1">Polypeptide deformylase</fullName>
    </alternativeName>
</protein>
<name>DEF_ECOL5</name>
<feature type="chain" id="PRO_0000301032" description="Peptide deformylase">
    <location>
        <begin position="1"/>
        <end position="169"/>
    </location>
</feature>
<feature type="active site" evidence="1">
    <location>
        <position position="134"/>
    </location>
</feature>
<feature type="binding site" evidence="1">
    <location>
        <position position="91"/>
    </location>
    <ligand>
        <name>Fe cation</name>
        <dbReference type="ChEBI" id="CHEBI:24875"/>
    </ligand>
</feature>
<feature type="binding site" evidence="1">
    <location>
        <position position="133"/>
    </location>
    <ligand>
        <name>Fe cation</name>
        <dbReference type="ChEBI" id="CHEBI:24875"/>
    </ligand>
</feature>
<feature type="binding site" evidence="1">
    <location>
        <position position="137"/>
    </location>
    <ligand>
        <name>Fe cation</name>
        <dbReference type="ChEBI" id="CHEBI:24875"/>
    </ligand>
</feature>
<accession>Q0TCH5</accession>
<comment type="function">
    <text evidence="1">Removes the formyl group from the N-terminal Met of newly synthesized proteins. Requires at least a dipeptide for an efficient rate of reaction. N-terminal L-methionine is a prerequisite for activity but the enzyme has broad specificity at other positions.</text>
</comment>
<comment type="catalytic activity">
    <reaction evidence="1">
        <text>N-terminal N-formyl-L-methionyl-[peptide] + H2O = N-terminal L-methionyl-[peptide] + formate</text>
        <dbReference type="Rhea" id="RHEA:24420"/>
        <dbReference type="Rhea" id="RHEA-COMP:10639"/>
        <dbReference type="Rhea" id="RHEA-COMP:10640"/>
        <dbReference type="ChEBI" id="CHEBI:15377"/>
        <dbReference type="ChEBI" id="CHEBI:15740"/>
        <dbReference type="ChEBI" id="CHEBI:49298"/>
        <dbReference type="ChEBI" id="CHEBI:64731"/>
        <dbReference type="EC" id="3.5.1.88"/>
    </reaction>
</comment>
<comment type="cofactor">
    <cofactor evidence="1">
        <name>Fe(2+)</name>
        <dbReference type="ChEBI" id="CHEBI:29033"/>
    </cofactor>
    <text evidence="1">Binds 1 Fe(2+) ion.</text>
</comment>
<comment type="similarity">
    <text evidence="1">Belongs to the polypeptide deformylase family.</text>
</comment>
<evidence type="ECO:0000255" key="1">
    <source>
        <dbReference type="HAMAP-Rule" id="MF_00163"/>
    </source>
</evidence>
<dbReference type="EC" id="3.5.1.88" evidence="1"/>
<dbReference type="EMBL" id="CP000247">
    <property type="protein sequence ID" value="ABG71354.1"/>
    <property type="molecule type" value="Genomic_DNA"/>
</dbReference>
<dbReference type="RefSeq" id="WP_000114984.1">
    <property type="nucleotide sequence ID" value="NC_008253.1"/>
</dbReference>
<dbReference type="SMR" id="Q0TCH5"/>
<dbReference type="GeneID" id="89518132"/>
<dbReference type="KEGG" id="ecp:ECP_3374"/>
<dbReference type="HOGENOM" id="CLU_061901_2_1_6"/>
<dbReference type="Proteomes" id="UP000009182">
    <property type="component" value="Chromosome"/>
</dbReference>
<dbReference type="GO" id="GO:0046872">
    <property type="term" value="F:metal ion binding"/>
    <property type="evidence" value="ECO:0007669"/>
    <property type="project" value="UniProtKB-KW"/>
</dbReference>
<dbReference type="GO" id="GO:0042586">
    <property type="term" value="F:peptide deformylase activity"/>
    <property type="evidence" value="ECO:0007669"/>
    <property type="project" value="UniProtKB-UniRule"/>
</dbReference>
<dbReference type="GO" id="GO:0043686">
    <property type="term" value="P:co-translational protein modification"/>
    <property type="evidence" value="ECO:0007669"/>
    <property type="project" value="TreeGrafter"/>
</dbReference>
<dbReference type="GO" id="GO:0006412">
    <property type="term" value="P:translation"/>
    <property type="evidence" value="ECO:0007669"/>
    <property type="project" value="UniProtKB-UniRule"/>
</dbReference>
<dbReference type="CDD" id="cd00487">
    <property type="entry name" value="Pep_deformylase"/>
    <property type="match status" value="1"/>
</dbReference>
<dbReference type="FunFam" id="3.90.45.10:FF:000001">
    <property type="entry name" value="Peptide deformylase"/>
    <property type="match status" value="1"/>
</dbReference>
<dbReference type="Gene3D" id="3.90.45.10">
    <property type="entry name" value="Peptide deformylase"/>
    <property type="match status" value="1"/>
</dbReference>
<dbReference type="HAMAP" id="MF_00163">
    <property type="entry name" value="Pep_deformylase"/>
    <property type="match status" value="1"/>
</dbReference>
<dbReference type="InterPro" id="IPR023635">
    <property type="entry name" value="Peptide_deformylase"/>
</dbReference>
<dbReference type="InterPro" id="IPR036821">
    <property type="entry name" value="Peptide_deformylase_sf"/>
</dbReference>
<dbReference type="NCBIfam" id="TIGR00079">
    <property type="entry name" value="pept_deformyl"/>
    <property type="match status" value="1"/>
</dbReference>
<dbReference type="NCBIfam" id="NF001159">
    <property type="entry name" value="PRK00150.1-3"/>
    <property type="match status" value="1"/>
</dbReference>
<dbReference type="PANTHER" id="PTHR10458">
    <property type="entry name" value="PEPTIDE DEFORMYLASE"/>
    <property type="match status" value="1"/>
</dbReference>
<dbReference type="PANTHER" id="PTHR10458:SF21">
    <property type="entry name" value="PEPTIDE DEFORMYLASE"/>
    <property type="match status" value="1"/>
</dbReference>
<dbReference type="Pfam" id="PF01327">
    <property type="entry name" value="Pep_deformylase"/>
    <property type="match status" value="1"/>
</dbReference>
<dbReference type="PIRSF" id="PIRSF004749">
    <property type="entry name" value="Pep_def"/>
    <property type="match status" value="1"/>
</dbReference>
<dbReference type="PRINTS" id="PR01576">
    <property type="entry name" value="PDEFORMYLASE"/>
</dbReference>
<dbReference type="SUPFAM" id="SSF56420">
    <property type="entry name" value="Peptide deformylase"/>
    <property type="match status" value="1"/>
</dbReference>
<sequence length="169" mass="19328">MSVLQVLHIPDERLRKVAKPVEEVNAEIQRIVDDMFETMYAEEGIGLAATQVDIHQRIIVIDVSENRDERLVLINPELLEKSGETGIEEGCLSIPEQRALVPRAEKVKIRALDRDGKPFELEADGLLAICIQHEMDHLVGKLFMDYLSPLKQQRIRQKVEKLDRLKARA</sequence>
<organism>
    <name type="scientific">Escherichia coli O6:K15:H31 (strain 536 / UPEC)</name>
    <dbReference type="NCBI Taxonomy" id="362663"/>
    <lineage>
        <taxon>Bacteria</taxon>
        <taxon>Pseudomonadati</taxon>
        <taxon>Pseudomonadota</taxon>
        <taxon>Gammaproteobacteria</taxon>
        <taxon>Enterobacterales</taxon>
        <taxon>Enterobacteriaceae</taxon>
        <taxon>Escherichia</taxon>
    </lineage>
</organism>